<keyword id="KW-0066">ATP synthesis</keyword>
<keyword id="KW-0067">ATP-binding</keyword>
<keyword id="KW-1003">Cell membrane</keyword>
<keyword id="KW-0139">CF(1)</keyword>
<keyword id="KW-0375">Hydrogen ion transport</keyword>
<keyword id="KW-0406">Ion transport</keyword>
<keyword id="KW-0472">Membrane</keyword>
<keyword id="KW-0547">Nucleotide-binding</keyword>
<keyword id="KW-1185">Reference proteome</keyword>
<keyword id="KW-1278">Translocase</keyword>
<keyword id="KW-0813">Transport</keyword>
<proteinExistence type="inferred from homology"/>
<comment type="function">
    <text evidence="1">Produces ATP from ADP in the presence of a proton gradient across the membrane. The catalytic sites are hosted primarily by the beta subunits.</text>
</comment>
<comment type="catalytic activity">
    <reaction evidence="1">
        <text>ATP + H2O + 4 H(+)(in) = ADP + phosphate + 5 H(+)(out)</text>
        <dbReference type="Rhea" id="RHEA:57720"/>
        <dbReference type="ChEBI" id="CHEBI:15377"/>
        <dbReference type="ChEBI" id="CHEBI:15378"/>
        <dbReference type="ChEBI" id="CHEBI:30616"/>
        <dbReference type="ChEBI" id="CHEBI:43474"/>
        <dbReference type="ChEBI" id="CHEBI:456216"/>
        <dbReference type="EC" id="7.1.2.2"/>
    </reaction>
</comment>
<comment type="subunit">
    <text evidence="1">F-type ATPases have 2 components, CF(1) - the catalytic core - and CF(0) - the membrane proton channel. CF(1) has five subunits: alpha(3), beta(3), gamma(1), delta(1), epsilon(1). CF(0) has three main subunits: a(1), b(2) and c(9-12). The alpha and beta chains form an alternating ring which encloses part of the gamma chain. CF(1) is attached to CF(0) by a central stalk formed by the gamma and epsilon chains, while a peripheral stalk is formed by the delta and b chains.</text>
</comment>
<comment type="subcellular location">
    <subcellularLocation>
        <location evidence="1">Cell membrane</location>
        <topology evidence="1">Peripheral membrane protein</topology>
    </subcellularLocation>
</comment>
<comment type="similarity">
    <text evidence="1">Belongs to the ATPase alpha/beta chains family.</text>
</comment>
<name>ATPB_SALTO</name>
<accession>A4XAW2</accession>
<reference key="1">
    <citation type="journal article" date="2007" name="Proc. Natl. Acad. Sci. U.S.A.">
        <title>Genome sequencing reveals complex secondary metabolome in the marine actinomycete Salinispora tropica.</title>
        <authorList>
            <person name="Udwary D.W."/>
            <person name="Zeigler L."/>
            <person name="Asolkar R.N."/>
            <person name="Singan V."/>
            <person name="Lapidus A."/>
            <person name="Fenical W."/>
            <person name="Jensen P.R."/>
            <person name="Moore B.S."/>
        </authorList>
    </citation>
    <scope>NUCLEOTIDE SEQUENCE [LARGE SCALE GENOMIC DNA]</scope>
    <source>
        <strain>ATCC BAA-916 / DSM 44818 / JCM 13857 / NBRC 105044 / CNB-440</strain>
    </source>
</reference>
<evidence type="ECO:0000255" key="1">
    <source>
        <dbReference type="HAMAP-Rule" id="MF_01347"/>
    </source>
</evidence>
<feature type="chain" id="PRO_1000086921" description="ATP synthase subunit beta">
    <location>
        <begin position="1"/>
        <end position="486"/>
    </location>
</feature>
<feature type="binding site" evidence="1">
    <location>
        <begin position="171"/>
        <end position="178"/>
    </location>
    <ligand>
        <name>ATP</name>
        <dbReference type="ChEBI" id="CHEBI:30616"/>
    </ligand>
</feature>
<organism>
    <name type="scientific">Salinispora tropica (strain ATCC BAA-916 / DSM 44818 / JCM 13857 / NBRC 105044 / CNB-440)</name>
    <dbReference type="NCBI Taxonomy" id="369723"/>
    <lineage>
        <taxon>Bacteria</taxon>
        <taxon>Bacillati</taxon>
        <taxon>Actinomycetota</taxon>
        <taxon>Actinomycetes</taxon>
        <taxon>Micromonosporales</taxon>
        <taxon>Micromonosporaceae</taxon>
        <taxon>Salinispora</taxon>
    </lineage>
</organism>
<dbReference type="EC" id="7.1.2.2" evidence="1"/>
<dbReference type="EMBL" id="CP000667">
    <property type="protein sequence ID" value="ABP56061.1"/>
    <property type="molecule type" value="Genomic_DNA"/>
</dbReference>
<dbReference type="SMR" id="A4XAW2"/>
<dbReference type="STRING" id="369723.Strop_3630"/>
<dbReference type="KEGG" id="stp:Strop_3630"/>
<dbReference type="eggNOG" id="COG0055">
    <property type="taxonomic scope" value="Bacteria"/>
</dbReference>
<dbReference type="HOGENOM" id="CLU_022398_0_2_11"/>
<dbReference type="Proteomes" id="UP000000235">
    <property type="component" value="Chromosome"/>
</dbReference>
<dbReference type="GO" id="GO:0005886">
    <property type="term" value="C:plasma membrane"/>
    <property type="evidence" value="ECO:0007669"/>
    <property type="project" value="UniProtKB-SubCell"/>
</dbReference>
<dbReference type="GO" id="GO:0045259">
    <property type="term" value="C:proton-transporting ATP synthase complex"/>
    <property type="evidence" value="ECO:0007669"/>
    <property type="project" value="UniProtKB-KW"/>
</dbReference>
<dbReference type="GO" id="GO:0005524">
    <property type="term" value="F:ATP binding"/>
    <property type="evidence" value="ECO:0007669"/>
    <property type="project" value="UniProtKB-UniRule"/>
</dbReference>
<dbReference type="GO" id="GO:0016887">
    <property type="term" value="F:ATP hydrolysis activity"/>
    <property type="evidence" value="ECO:0007669"/>
    <property type="project" value="InterPro"/>
</dbReference>
<dbReference type="GO" id="GO:0046933">
    <property type="term" value="F:proton-transporting ATP synthase activity, rotational mechanism"/>
    <property type="evidence" value="ECO:0007669"/>
    <property type="project" value="UniProtKB-UniRule"/>
</dbReference>
<dbReference type="CDD" id="cd18110">
    <property type="entry name" value="ATP-synt_F1_beta_C"/>
    <property type="match status" value="1"/>
</dbReference>
<dbReference type="CDD" id="cd18115">
    <property type="entry name" value="ATP-synt_F1_beta_N"/>
    <property type="match status" value="1"/>
</dbReference>
<dbReference type="CDD" id="cd01133">
    <property type="entry name" value="F1-ATPase_beta_CD"/>
    <property type="match status" value="1"/>
</dbReference>
<dbReference type="FunFam" id="1.10.1140.10:FF:000001">
    <property type="entry name" value="ATP synthase subunit beta"/>
    <property type="match status" value="1"/>
</dbReference>
<dbReference type="FunFam" id="2.40.10.170:FF:000005">
    <property type="entry name" value="ATP synthase subunit beta"/>
    <property type="match status" value="1"/>
</dbReference>
<dbReference type="FunFam" id="3.40.50.300:FF:000004">
    <property type="entry name" value="ATP synthase subunit beta"/>
    <property type="match status" value="1"/>
</dbReference>
<dbReference type="Gene3D" id="2.40.10.170">
    <property type="match status" value="1"/>
</dbReference>
<dbReference type="Gene3D" id="1.10.1140.10">
    <property type="entry name" value="Bovine Mitochondrial F1-atpase, Atp Synthase Beta Chain, Chain D, domain 3"/>
    <property type="match status" value="1"/>
</dbReference>
<dbReference type="Gene3D" id="3.40.50.300">
    <property type="entry name" value="P-loop containing nucleotide triphosphate hydrolases"/>
    <property type="match status" value="1"/>
</dbReference>
<dbReference type="HAMAP" id="MF_01347">
    <property type="entry name" value="ATP_synth_beta_bact"/>
    <property type="match status" value="1"/>
</dbReference>
<dbReference type="InterPro" id="IPR003593">
    <property type="entry name" value="AAA+_ATPase"/>
</dbReference>
<dbReference type="InterPro" id="IPR055190">
    <property type="entry name" value="ATP-synt_VA_C"/>
</dbReference>
<dbReference type="InterPro" id="IPR005722">
    <property type="entry name" value="ATP_synth_F1_bsu"/>
</dbReference>
<dbReference type="InterPro" id="IPR020003">
    <property type="entry name" value="ATPase_a/bsu_AS"/>
</dbReference>
<dbReference type="InterPro" id="IPR050053">
    <property type="entry name" value="ATPase_alpha/beta_chains"/>
</dbReference>
<dbReference type="InterPro" id="IPR004100">
    <property type="entry name" value="ATPase_F1/V1/A1_a/bsu_N"/>
</dbReference>
<dbReference type="InterPro" id="IPR036121">
    <property type="entry name" value="ATPase_F1/V1/A1_a/bsu_N_sf"/>
</dbReference>
<dbReference type="InterPro" id="IPR000194">
    <property type="entry name" value="ATPase_F1/V1/A1_a/bsu_nucl-bd"/>
</dbReference>
<dbReference type="InterPro" id="IPR024034">
    <property type="entry name" value="ATPase_F1/V1_b/a_C"/>
</dbReference>
<dbReference type="InterPro" id="IPR027417">
    <property type="entry name" value="P-loop_NTPase"/>
</dbReference>
<dbReference type="NCBIfam" id="TIGR01039">
    <property type="entry name" value="atpD"/>
    <property type="match status" value="1"/>
</dbReference>
<dbReference type="PANTHER" id="PTHR15184">
    <property type="entry name" value="ATP SYNTHASE"/>
    <property type="match status" value="1"/>
</dbReference>
<dbReference type="PANTHER" id="PTHR15184:SF71">
    <property type="entry name" value="ATP SYNTHASE SUBUNIT BETA, MITOCHONDRIAL"/>
    <property type="match status" value="1"/>
</dbReference>
<dbReference type="Pfam" id="PF00006">
    <property type="entry name" value="ATP-synt_ab"/>
    <property type="match status" value="1"/>
</dbReference>
<dbReference type="Pfam" id="PF02874">
    <property type="entry name" value="ATP-synt_ab_N"/>
    <property type="match status" value="1"/>
</dbReference>
<dbReference type="Pfam" id="PF22919">
    <property type="entry name" value="ATP-synt_VA_C"/>
    <property type="match status" value="1"/>
</dbReference>
<dbReference type="SMART" id="SM00382">
    <property type="entry name" value="AAA"/>
    <property type="match status" value="1"/>
</dbReference>
<dbReference type="SUPFAM" id="SSF47917">
    <property type="entry name" value="C-terminal domain of alpha and beta subunits of F1 ATP synthase"/>
    <property type="match status" value="1"/>
</dbReference>
<dbReference type="SUPFAM" id="SSF50615">
    <property type="entry name" value="N-terminal domain of alpha and beta subunits of F1 ATP synthase"/>
    <property type="match status" value="1"/>
</dbReference>
<dbReference type="SUPFAM" id="SSF52540">
    <property type="entry name" value="P-loop containing nucleoside triphosphate hydrolases"/>
    <property type="match status" value="1"/>
</dbReference>
<dbReference type="PROSITE" id="PS00152">
    <property type="entry name" value="ATPASE_ALPHA_BETA"/>
    <property type="match status" value="1"/>
</dbReference>
<gene>
    <name evidence="1" type="primary">atpD</name>
    <name type="ordered locus">Strop_3630</name>
</gene>
<protein>
    <recommendedName>
        <fullName evidence="1">ATP synthase subunit beta</fullName>
        <ecNumber evidence="1">7.1.2.2</ecNumber>
    </recommendedName>
    <alternativeName>
        <fullName evidence="1">ATP synthase F1 sector subunit beta</fullName>
    </alternativeName>
    <alternativeName>
        <fullName evidence="1">F-ATPase subunit beta</fullName>
    </alternativeName>
</protein>
<sequence>MMTVSATAEGPAGTKAATGRVVRVIGPVVDAEFPRDAMPDLFNAMHVDVTLSGGEKTLTLEVAQHLGDNLVRAISMQPTDGLVRGVEVRDTGSPITVPVGDTVKGHVFNAIGECLNLEPGETLSPDDHWQIHRKAPAFADLEPKTEMLETGIKVIDLLAPYVKGGKIGLFGGAGVGKTVLIQEMITRVARNFGGTSVFAGVGERTREGNDLIAEMTESGVIDKTALVYGQMDEPPGTRLRVALSALTMAEYFRDVQKQEVLLFIDNIFRFTQAGSEVSTLLGRMPSAVGYQPTLADEMGELQERITSVRGQAITSLQAIYVPADDYTDPAPATTFAHLDATTNLERSISDKGIYPAVDPLASSSRILAPEFVGQEHFTVATEVKRILQRYKDLQDIIAILGIEELSEEDKLTVGRARRIERFLSQNTYAAEQFTGMKGSTVPIKETIDAFKKISEGEYDHFPEQAFFMCGGLEDLERKAKELMAEG</sequence>